<keyword id="KW-0249">Electron transport</keyword>
<keyword id="KW-0472">Membrane</keyword>
<keyword id="KW-0496">Mitochondrion</keyword>
<keyword id="KW-0999">Mitochondrion inner membrane</keyword>
<keyword id="KW-0520">NAD</keyword>
<keyword id="KW-0679">Respiratory chain</keyword>
<keyword id="KW-1278">Translocase</keyword>
<keyword id="KW-0812">Transmembrane</keyword>
<keyword id="KW-1133">Transmembrane helix</keyword>
<keyword id="KW-0813">Transport</keyword>
<keyword id="KW-0830">Ubiquinone</keyword>
<sequence>MLSINLNLIVAFLLALMGVLIYRSHLMSTLLCLEGMMLSLFILMTLLITHFHMFSMSMTPLILLVFSACEAAIGLALLVKISATHGSDHIQNLNLLQC</sequence>
<geneLocation type="mitochondrion"/>
<reference key="1">
    <citation type="journal article" date="2006" name="Syst. Biol.">
        <title>Combined mitochondrial and nuclear DNA sequences resolve the interrelations of the major Australasian marsupial radiations.</title>
        <authorList>
            <person name="Phillips M.J."/>
            <person name="McLenachan P.A."/>
            <person name="Down C."/>
            <person name="Gibb G.C."/>
            <person name="Penny D."/>
        </authorList>
    </citation>
    <scope>NUCLEOTIDE SEQUENCE [GENOMIC DNA]</scope>
</reference>
<protein>
    <recommendedName>
        <fullName>NADH-ubiquinone oxidoreductase chain 4L</fullName>
        <ecNumber>7.1.1.2</ecNumber>
    </recommendedName>
    <alternativeName>
        <fullName>NADH dehydrogenase subunit 4L</fullName>
    </alternativeName>
</protein>
<feature type="chain" id="PRO_0000275122" description="NADH-ubiquinone oxidoreductase chain 4L">
    <location>
        <begin position="1"/>
        <end position="98"/>
    </location>
</feature>
<feature type="transmembrane region" description="Helical" evidence="3">
    <location>
        <begin position="1"/>
        <end position="21"/>
    </location>
</feature>
<feature type="transmembrane region" description="Helical" evidence="3">
    <location>
        <begin position="29"/>
        <end position="49"/>
    </location>
</feature>
<feature type="transmembrane region" description="Helical" evidence="3">
    <location>
        <begin position="59"/>
        <end position="79"/>
    </location>
</feature>
<proteinExistence type="inferred from homology"/>
<gene>
    <name type="primary">MT-ND4L</name>
    <name type="synonym">MTND4L</name>
    <name type="synonym">NADH4L</name>
    <name type="synonym">ND4L</name>
</gene>
<accession>Q32US1</accession>
<name>NU4LM_SMICR</name>
<evidence type="ECO:0000250" key="1">
    <source>
        <dbReference type="UniProtKB" id="P03901"/>
    </source>
</evidence>
<evidence type="ECO:0000250" key="2">
    <source>
        <dbReference type="UniProtKB" id="P03902"/>
    </source>
</evidence>
<evidence type="ECO:0000255" key="3"/>
<evidence type="ECO:0000305" key="4"/>
<organism>
    <name type="scientific">Sminthopsis crassicaudata</name>
    <name type="common">Fat-tailed dunnart</name>
    <name type="synonym">Phascogale crassicaudata</name>
    <dbReference type="NCBI Taxonomy" id="9301"/>
    <lineage>
        <taxon>Eukaryota</taxon>
        <taxon>Metazoa</taxon>
        <taxon>Chordata</taxon>
        <taxon>Craniata</taxon>
        <taxon>Vertebrata</taxon>
        <taxon>Euteleostomi</taxon>
        <taxon>Mammalia</taxon>
        <taxon>Metatheria</taxon>
        <taxon>Dasyuromorphia</taxon>
        <taxon>Dasyuridae</taxon>
        <taxon>Sminthopsis</taxon>
    </lineage>
</organism>
<comment type="function">
    <text evidence="1">Core subunit of the mitochondrial membrane respiratory chain NADH dehydrogenase (Complex I) which catalyzes electron transfer from NADH through the respiratory chain, using ubiquinone as an electron acceptor. Part of the enzyme membrane arm which is embedded in the lipid bilayer and involved in proton translocation.</text>
</comment>
<comment type="catalytic activity">
    <reaction evidence="1">
        <text>a ubiquinone + NADH + 5 H(+)(in) = a ubiquinol + NAD(+) + 4 H(+)(out)</text>
        <dbReference type="Rhea" id="RHEA:29091"/>
        <dbReference type="Rhea" id="RHEA-COMP:9565"/>
        <dbReference type="Rhea" id="RHEA-COMP:9566"/>
        <dbReference type="ChEBI" id="CHEBI:15378"/>
        <dbReference type="ChEBI" id="CHEBI:16389"/>
        <dbReference type="ChEBI" id="CHEBI:17976"/>
        <dbReference type="ChEBI" id="CHEBI:57540"/>
        <dbReference type="ChEBI" id="CHEBI:57945"/>
        <dbReference type="EC" id="7.1.1.2"/>
    </reaction>
    <physiologicalReaction direction="left-to-right" evidence="1">
        <dbReference type="Rhea" id="RHEA:29092"/>
    </physiologicalReaction>
</comment>
<comment type="subunit">
    <text evidence="2">Core subunit of respiratory chain NADH dehydrogenase (Complex I) which is composed of 45 different subunits.</text>
</comment>
<comment type="subcellular location">
    <subcellularLocation>
        <location evidence="2">Mitochondrion inner membrane</location>
        <topology evidence="3">Multi-pass membrane protein</topology>
    </subcellularLocation>
</comment>
<comment type="similarity">
    <text evidence="4">Belongs to the complex I subunit 4L family.</text>
</comment>
<dbReference type="EC" id="7.1.1.2"/>
<dbReference type="EMBL" id="AY795974">
    <property type="protein sequence ID" value="AAV50077.1"/>
    <property type="molecule type" value="Genomic_DNA"/>
</dbReference>
<dbReference type="RefSeq" id="YP_423983.1">
    <property type="nucleotide sequence ID" value="NC_007631.1"/>
</dbReference>
<dbReference type="SMR" id="Q32US1"/>
<dbReference type="GeneID" id="3802059"/>
<dbReference type="CTD" id="4539"/>
<dbReference type="GO" id="GO:0005743">
    <property type="term" value="C:mitochondrial inner membrane"/>
    <property type="evidence" value="ECO:0000250"/>
    <property type="project" value="UniProtKB"/>
</dbReference>
<dbReference type="GO" id="GO:0045271">
    <property type="term" value="C:respiratory chain complex I"/>
    <property type="evidence" value="ECO:0000250"/>
    <property type="project" value="UniProtKB"/>
</dbReference>
<dbReference type="GO" id="GO:0008137">
    <property type="term" value="F:NADH dehydrogenase (ubiquinone) activity"/>
    <property type="evidence" value="ECO:0000250"/>
    <property type="project" value="UniProtKB"/>
</dbReference>
<dbReference type="GO" id="GO:0042773">
    <property type="term" value="P:ATP synthesis coupled electron transport"/>
    <property type="evidence" value="ECO:0007669"/>
    <property type="project" value="InterPro"/>
</dbReference>
<dbReference type="FunFam" id="1.10.287.3510:FF:000002">
    <property type="entry name" value="NADH-ubiquinone oxidoreductase chain 4L"/>
    <property type="match status" value="1"/>
</dbReference>
<dbReference type="Gene3D" id="1.10.287.3510">
    <property type="match status" value="1"/>
</dbReference>
<dbReference type="InterPro" id="IPR001133">
    <property type="entry name" value="NADH_UbQ_OxRdtase_chain4L/K"/>
</dbReference>
<dbReference type="InterPro" id="IPR039428">
    <property type="entry name" value="NUOK/Mnh_C1-like"/>
</dbReference>
<dbReference type="PANTHER" id="PTHR11434:SF0">
    <property type="entry name" value="NADH-UBIQUINONE OXIDOREDUCTASE CHAIN 4L"/>
    <property type="match status" value="1"/>
</dbReference>
<dbReference type="PANTHER" id="PTHR11434">
    <property type="entry name" value="NADH-UBIQUINONE OXIDOREDUCTASE SUBUNIT ND4L"/>
    <property type="match status" value="1"/>
</dbReference>
<dbReference type="Pfam" id="PF00420">
    <property type="entry name" value="Oxidored_q2"/>
    <property type="match status" value="1"/>
</dbReference>